<reference key="1">
    <citation type="submission" date="2007-06" db="EMBL/GenBank/DDBJ databases">
        <title>Complete sequence of chromosome of Staphylococcus aureus subsp. aureus JH1.</title>
        <authorList>
            <consortium name="US DOE Joint Genome Institute"/>
            <person name="Copeland A."/>
            <person name="Lucas S."/>
            <person name="Lapidus A."/>
            <person name="Barry K."/>
            <person name="Detter J.C."/>
            <person name="Glavina del Rio T."/>
            <person name="Hammon N."/>
            <person name="Israni S."/>
            <person name="Dalin E."/>
            <person name="Tice H."/>
            <person name="Pitluck S."/>
            <person name="Chain P."/>
            <person name="Malfatti S."/>
            <person name="Shin M."/>
            <person name="Vergez L."/>
            <person name="Schmutz J."/>
            <person name="Larimer F."/>
            <person name="Land M."/>
            <person name="Hauser L."/>
            <person name="Kyrpides N."/>
            <person name="Ivanova N."/>
            <person name="Tomasz A."/>
            <person name="Richardson P."/>
        </authorList>
    </citation>
    <scope>NUCLEOTIDE SEQUENCE [LARGE SCALE GENOMIC DNA]</scope>
    <source>
        <strain>JH1</strain>
    </source>
</reference>
<feature type="chain" id="PRO_1000080199" description="Putative membrane protein insertion efficiency factor">
    <location>
        <begin position="1"/>
        <end position="85"/>
    </location>
</feature>
<feature type="region of interest" description="Disordered" evidence="2">
    <location>
        <begin position="62"/>
        <end position="85"/>
    </location>
</feature>
<proteinExistence type="inferred from homology"/>
<comment type="function">
    <text evidence="1">Could be involved in insertion of integral membrane proteins into the membrane.</text>
</comment>
<comment type="subcellular location">
    <subcellularLocation>
        <location evidence="1">Cell membrane</location>
        <topology evidence="1">Peripheral membrane protein</topology>
        <orientation evidence="1">Cytoplasmic side</orientation>
    </subcellularLocation>
</comment>
<comment type="similarity">
    <text evidence="1">Belongs to the UPF0161 family.</text>
</comment>
<name>YIDD_STAA2</name>
<organism>
    <name type="scientific">Staphylococcus aureus (strain JH1)</name>
    <dbReference type="NCBI Taxonomy" id="359787"/>
    <lineage>
        <taxon>Bacteria</taxon>
        <taxon>Bacillati</taxon>
        <taxon>Bacillota</taxon>
        <taxon>Bacilli</taxon>
        <taxon>Bacillales</taxon>
        <taxon>Staphylococcaceae</taxon>
        <taxon>Staphylococcus</taxon>
    </lineage>
</organism>
<dbReference type="EMBL" id="CP000736">
    <property type="protein sequence ID" value="ABR52723.1"/>
    <property type="molecule type" value="Genomic_DNA"/>
</dbReference>
<dbReference type="KEGG" id="sah:SaurJH1_1881"/>
<dbReference type="HOGENOM" id="CLU_144811_6_0_9"/>
<dbReference type="GO" id="GO:0005886">
    <property type="term" value="C:plasma membrane"/>
    <property type="evidence" value="ECO:0007669"/>
    <property type="project" value="UniProtKB-SubCell"/>
</dbReference>
<dbReference type="HAMAP" id="MF_00386">
    <property type="entry name" value="UPF0161_YidD"/>
    <property type="match status" value="1"/>
</dbReference>
<dbReference type="InterPro" id="IPR002696">
    <property type="entry name" value="Membr_insert_effic_factor_YidD"/>
</dbReference>
<dbReference type="NCBIfam" id="TIGR00278">
    <property type="entry name" value="membrane protein insertion efficiency factor YidD"/>
    <property type="match status" value="1"/>
</dbReference>
<dbReference type="PANTHER" id="PTHR33383">
    <property type="entry name" value="MEMBRANE PROTEIN INSERTION EFFICIENCY FACTOR-RELATED"/>
    <property type="match status" value="1"/>
</dbReference>
<dbReference type="PANTHER" id="PTHR33383:SF1">
    <property type="entry name" value="MEMBRANE PROTEIN INSERTION EFFICIENCY FACTOR-RELATED"/>
    <property type="match status" value="1"/>
</dbReference>
<dbReference type="Pfam" id="PF01809">
    <property type="entry name" value="YidD"/>
    <property type="match status" value="1"/>
</dbReference>
<dbReference type="SMART" id="SM01234">
    <property type="entry name" value="Haemolytic"/>
    <property type="match status" value="1"/>
</dbReference>
<keyword id="KW-1003">Cell membrane</keyword>
<keyword id="KW-0472">Membrane</keyword>
<evidence type="ECO:0000255" key="1">
    <source>
        <dbReference type="HAMAP-Rule" id="MF_00386"/>
    </source>
</evidence>
<evidence type="ECO:0000256" key="2">
    <source>
        <dbReference type="SAM" id="MobiDB-lite"/>
    </source>
</evidence>
<sequence>MKKIFLAMIHFYQRFISPLTPPTCRFYPTCSEYTREAIQYHGAFKGLYLGIRRILKCHPLHKGGFDPVPLKKDKSASKHSHKHNH</sequence>
<gene>
    <name type="ordered locus">SaurJH1_1881</name>
</gene>
<accession>A6U2Q5</accession>
<protein>
    <recommendedName>
        <fullName evidence="1">Putative membrane protein insertion efficiency factor</fullName>
    </recommendedName>
</protein>